<accession>P26084</accession>
<gene>
    <name evidence="1" type="primary">NP</name>
</gene>
<comment type="function">
    <text evidence="1">Encapsidates the negative strand viral RNA, protecting it from nucleases. The encapsidated genomic RNA is termed the ribonucleoprotein (RNP) and serves as template for transcription and replication. The RNP needs to be localized in the host nucleus to start an infectious cycle, but is too large to diffuse through the nuclear pore complex. NP comprises at least 2 nuclear localization signals that are responsible for the active RNP import into the nucleus through cellular importin alpha/beta pathway. Later in the infection, nclear export of RNPs are mediated through viral proteins NEP interacting with M1 which binds nucleoproteins. It is possible that nucleoprotein binds directly host exportin-1/XPO1 and plays an active role in RNPs nuclear export. M1 interaction with RNP seems to hide nucleoprotein's nuclear localization signals. Soon after a virion infects a new cell, M1 dissociates from the RNP under acidification of the virion driven by M2 protein. Dissociation of M1 from RNP unmasks nucleoprotein's nuclear localization signals, targeting the RNP to the nucleus.</text>
</comment>
<comment type="subunit">
    <text evidence="1">Homomultimerizes to form the nucleocapsid. May bind host exportin-1/XPO1. Binds to viral genomic RNA. Protein-RNA contacts are mediated by a combination of electrostatic interactions between positively charged residues and the phosphate backbone and planar interactions between aromatic side chains and bases.</text>
</comment>
<comment type="subcellular location">
    <subcellularLocation>
        <location evidence="1">Virion</location>
    </subcellularLocation>
    <subcellularLocation>
        <location evidence="1">Host nucleus</location>
    </subcellularLocation>
</comment>
<comment type="PTM">
    <text evidence="1">Late in virus-infected cells, may be cleaved from a 56-kDa protein to a 53-kDa protein by a cellular caspase. This cleavage might be a marker for the onset of apoptosis in infected cells or have a specific function in virus host interaction.</text>
</comment>
<comment type="similarity">
    <text evidence="1">Belongs to the influenza viruses nucleoprotein family.</text>
</comment>
<reference key="1">
    <citation type="journal article" date="1991" name="J. Virol.">
        <title>Evolution of influenza A virus nucleoprotein genes: implications for the origins of H1N1 human and classical swine viruses.</title>
        <authorList>
            <person name="Gorman O.T."/>
            <person name="Bean W.J."/>
            <person name="Kawaoka Y."/>
            <person name="Donatelli I."/>
            <person name="Guo Y."/>
            <person name="Webster R.G."/>
        </authorList>
    </citation>
    <scope>NUCLEOTIDE SEQUENCE [GENOMIC RNA]</scope>
</reference>
<protein>
    <recommendedName>
        <fullName evidence="1">Nucleoprotein</fullName>
    </recommendedName>
    <alternativeName>
        <fullName evidence="1">Nucleocapsid protein</fullName>
        <shortName evidence="1">Protein N</shortName>
    </alternativeName>
</protein>
<evidence type="ECO:0000255" key="1">
    <source>
        <dbReference type="HAMAP-Rule" id="MF_04070"/>
    </source>
</evidence>
<evidence type="ECO:0000256" key="2">
    <source>
        <dbReference type="SAM" id="MobiDB-lite"/>
    </source>
</evidence>
<organismHost>
    <name type="scientific">Aves</name>
    <dbReference type="NCBI Taxonomy" id="8782"/>
</organismHost>
<organismHost>
    <name type="scientific">Homo sapiens</name>
    <name type="common">Human</name>
    <dbReference type="NCBI Taxonomy" id="9606"/>
</organismHost>
<organismHost>
    <name type="scientific">Sus scrofa</name>
    <name type="common">Pig</name>
    <dbReference type="NCBI Taxonomy" id="9823"/>
</organismHost>
<proteinExistence type="inferred from homology"/>
<feature type="chain" id="PRO_0000079127" description="Nucleoprotein">
    <location>
        <begin position="1"/>
        <end position="498"/>
    </location>
</feature>
<feature type="region of interest" description="Disordered" evidence="2">
    <location>
        <begin position="1"/>
        <end position="22"/>
    </location>
</feature>
<feature type="short sequence motif" description="Unconventional nuclear localization signal" evidence="1">
    <location>
        <begin position="1"/>
        <end position="18"/>
    </location>
</feature>
<feature type="short sequence motif" description="Bipartite nuclear localization signal" evidence="1">
    <location>
        <begin position="198"/>
        <end position="216"/>
    </location>
</feature>
<feature type="compositionally biased region" description="Basic and acidic residues" evidence="2">
    <location>
        <begin position="8"/>
        <end position="22"/>
    </location>
</feature>
<keyword id="KW-0167">Capsid protein</keyword>
<keyword id="KW-1139">Helical capsid protein</keyword>
<keyword id="KW-1048">Host nucleus</keyword>
<keyword id="KW-0945">Host-virus interaction</keyword>
<keyword id="KW-0687">Ribonucleoprotein</keyword>
<keyword id="KW-0694">RNA-binding</keyword>
<keyword id="KW-0543">Viral nucleoprotein</keyword>
<keyword id="KW-1163">Viral penetration into host nucleus</keyword>
<keyword id="KW-0946">Virion</keyword>
<keyword id="KW-1160">Virus entry into host cell</keyword>
<organism>
    <name type="scientific">Influenza A virus (strain A/Swine/Italy/437/1976 H1N1)</name>
    <dbReference type="NCBI Taxonomy" id="383532"/>
    <lineage>
        <taxon>Viruses</taxon>
        <taxon>Riboviria</taxon>
        <taxon>Orthornavirae</taxon>
        <taxon>Negarnaviricota</taxon>
        <taxon>Polyploviricotina</taxon>
        <taxon>Insthoviricetes</taxon>
        <taxon>Articulavirales</taxon>
        <taxon>Orthomyxoviridae</taxon>
        <taxon>Alphainfluenzavirus</taxon>
        <taxon>Alphainfluenzavirus influenzae</taxon>
        <taxon>Influenza A virus</taxon>
    </lineage>
</organism>
<dbReference type="EMBL" id="M63764">
    <property type="protein sequence ID" value="AAA52263.1"/>
    <property type="molecule type" value="Genomic_RNA"/>
</dbReference>
<dbReference type="SMR" id="P26084"/>
<dbReference type="GO" id="GO:0019029">
    <property type="term" value="C:helical viral capsid"/>
    <property type="evidence" value="ECO:0007669"/>
    <property type="project" value="UniProtKB-UniRule"/>
</dbReference>
<dbReference type="GO" id="GO:0043657">
    <property type="term" value="C:host cell"/>
    <property type="evidence" value="ECO:0007669"/>
    <property type="project" value="GOC"/>
</dbReference>
<dbReference type="GO" id="GO:0042025">
    <property type="term" value="C:host cell nucleus"/>
    <property type="evidence" value="ECO:0007669"/>
    <property type="project" value="UniProtKB-SubCell"/>
</dbReference>
<dbReference type="GO" id="GO:1990904">
    <property type="term" value="C:ribonucleoprotein complex"/>
    <property type="evidence" value="ECO:0007669"/>
    <property type="project" value="UniProtKB-KW"/>
</dbReference>
<dbReference type="GO" id="GO:0019013">
    <property type="term" value="C:viral nucleocapsid"/>
    <property type="evidence" value="ECO:0007669"/>
    <property type="project" value="UniProtKB-UniRule"/>
</dbReference>
<dbReference type="GO" id="GO:0003723">
    <property type="term" value="F:RNA binding"/>
    <property type="evidence" value="ECO:0007669"/>
    <property type="project" value="UniProtKB-UniRule"/>
</dbReference>
<dbReference type="GO" id="GO:0005198">
    <property type="term" value="F:structural molecule activity"/>
    <property type="evidence" value="ECO:0007669"/>
    <property type="project" value="UniProtKB-UniRule"/>
</dbReference>
<dbReference type="GO" id="GO:0046718">
    <property type="term" value="P:symbiont entry into host cell"/>
    <property type="evidence" value="ECO:0007669"/>
    <property type="project" value="UniProtKB-KW"/>
</dbReference>
<dbReference type="GO" id="GO:0075732">
    <property type="term" value="P:viral penetration into host nucleus"/>
    <property type="evidence" value="ECO:0007669"/>
    <property type="project" value="UniProtKB-UniRule"/>
</dbReference>
<dbReference type="HAMAP" id="MF_04070">
    <property type="entry name" value="INFV_NCAP"/>
    <property type="match status" value="1"/>
</dbReference>
<dbReference type="InterPro" id="IPR002141">
    <property type="entry name" value="Flu_NP"/>
</dbReference>
<dbReference type="Pfam" id="PF00506">
    <property type="entry name" value="Flu_NP"/>
    <property type="match status" value="1"/>
</dbReference>
<dbReference type="SUPFAM" id="SSF161003">
    <property type="entry name" value="flu NP-like"/>
    <property type="match status" value="1"/>
</dbReference>
<sequence>MASQGTKRSYEQMETGGERQDATEIRASVGRMIGGIGRFYIQMCTELKLSDYEGRLIQNSITIERMVLSAFDERRNKYLEEHPSAGKDPKKTGGPIYRRIDGKWMRELILYDKEEIRRVWRQANNGEDATAGLTHIMIWHSNLNDATYQRTRALVRTGMDPRMCSLMQGSTLPRRSGAAGAAVKGVGTIAMELIRMIKRGINDRNFWRGENGRRTRIAYERMCNILKGKFQTAAQRAMMDQVRESRNPGNAEIEDLIFLARSALILRGSVAHKSCLPACVYGLAVASGHDFEREGYSLVGIDPFKLLQNSQVFSLIRPNENPAHKSQLVWMACHSAAFEDLRVSGFIRGKKVVPRGKLSTRGVQIASNENVEAMDSSTLELRSRYWAIRTRSGGNTNQQKASAGQISVQPTFSVQRNLPFERATVMAAFIGNNEGRTSDMRTEIIRMMESAKPEDLSFQGRGVFELSDEKATNPIVPSFDMNNEGSYFFGDNAEEYDN</sequence>
<name>NCAP_I76AG</name>